<proteinExistence type="inferred from homology"/>
<keyword id="KW-0067">ATP-binding</keyword>
<keyword id="KW-0131">Cell cycle</keyword>
<keyword id="KW-0132">Cell division</keyword>
<keyword id="KW-0133">Cell shape</keyword>
<keyword id="KW-0961">Cell wall biogenesis/degradation</keyword>
<keyword id="KW-0963">Cytoplasm</keyword>
<keyword id="KW-0436">Ligase</keyword>
<keyword id="KW-0547">Nucleotide-binding</keyword>
<keyword id="KW-0573">Peptidoglycan synthesis</keyword>
<feature type="chain" id="PRO_0000108996" description="UDP-N-acetylmuramoylalanine--D-glutamate ligase">
    <location>
        <begin position="1"/>
        <end position="419"/>
    </location>
</feature>
<feature type="binding site" evidence="1">
    <location>
        <begin position="109"/>
        <end position="115"/>
    </location>
    <ligand>
        <name>ATP</name>
        <dbReference type="ChEBI" id="CHEBI:30616"/>
    </ligand>
</feature>
<gene>
    <name evidence="1" type="primary">murD</name>
    <name type="ordered locus">CCA_00867</name>
</gene>
<reference key="1">
    <citation type="journal article" date="2003" name="Nucleic Acids Res.">
        <title>Genome sequence of Chlamydophila caviae (Chlamydia psittaci GPIC): examining the role of niche-specific genes in the evolution of the Chlamydiaceae.</title>
        <authorList>
            <person name="Read T.D."/>
            <person name="Myers G.S.A."/>
            <person name="Brunham R.C."/>
            <person name="Nelson W.C."/>
            <person name="Paulsen I.T."/>
            <person name="Heidelberg J.F."/>
            <person name="Holtzapple E.K."/>
            <person name="Khouri H.M."/>
            <person name="Federova N.B."/>
            <person name="Carty H.A."/>
            <person name="Umayam L.A."/>
            <person name="Haft D.H."/>
            <person name="Peterson J.D."/>
            <person name="Beanan M.J."/>
            <person name="White O."/>
            <person name="Salzberg S.L."/>
            <person name="Hsia R.-C."/>
            <person name="McClarty G."/>
            <person name="Rank R.G."/>
            <person name="Bavoil P.M."/>
            <person name="Fraser C.M."/>
        </authorList>
    </citation>
    <scope>NUCLEOTIDE SEQUENCE [LARGE SCALE GENOMIC DNA]</scope>
    <source>
        <strain>ATCC VR-813 / DSM 19441 / 03DC25 / GPIC</strain>
    </source>
</reference>
<name>MURD_CHLCV</name>
<accession>Q821S1</accession>
<organism>
    <name type="scientific">Chlamydia caviae (strain ATCC VR-813 / DSM 19441 / 03DC25 / GPIC)</name>
    <name type="common">Chlamydophila caviae</name>
    <dbReference type="NCBI Taxonomy" id="227941"/>
    <lineage>
        <taxon>Bacteria</taxon>
        <taxon>Pseudomonadati</taxon>
        <taxon>Chlamydiota</taxon>
        <taxon>Chlamydiia</taxon>
        <taxon>Chlamydiales</taxon>
        <taxon>Chlamydiaceae</taxon>
        <taxon>Chlamydia/Chlamydophila group</taxon>
        <taxon>Chlamydia</taxon>
    </lineage>
</organism>
<evidence type="ECO:0000255" key="1">
    <source>
        <dbReference type="HAMAP-Rule" id="MF_00639"/>
    </source>
</evidence>
<comment type="function">
    <text evidence="1">Cell wall formation. Catalyzes the addition of glutamate to the nucleotide precursor UDP-N-acetylmuramoyl-L-alanine (UMA).</text>
</comment>
<comment type="catalytic activity">
    <reaction evidence="1">
        <text>UDP-N-acetyl-alpha-D-muramoyl-L-alanine + D-glutamate + ATP = UDP-N-acetyl-alpha-D-muramoyl-L-alanyl-D-glutamate + ADP + phosphate + H(+)</text>
        <dbReference type="Rhea" id="RHEA:16429"/>
        <dbReference type="ChEBI" id="CHEBI:15378"/>
        <dbReference type="ChEBI" id="CHEBI:29986"/>
        <dbReference type="ChEBI" id="CHEBI:30616"/>
        <dbReference type="ChEBI" id="CHEBI:43474"/>
        <dbReference type="ChEBI" id="CHEBI:83898"/>
        <dbReference type="ChEBI" id="CHEBI:83900"/>
        <dbReference type="ChEBI" id="CHEBI:456216"/>
        <dbReference type="EC" id="6.3.2.9"/>
    </reaction>
</comment>
<comment type="pathway">
    <text evidence="1">Cell wall biogenesis; peptidoglycan biosynthesis.</text>
</comment>
<comment type="subcellular location">
    <subcellularLocation>
        <location evidence="1">Cytoplasm</location>
    </subcellularLocation>
</comment>
<comment type="similarity">
    <text evidence="1">Belongs to the MurCDEF family.</text>
</comment>
<protein>
    <recommendedName>
        <fullName evidence="1">UDP-N-acetylmuramoylalanine--D-glutamate ligase</fullName>
        <ecNumber evidence="1">6.3.2.9</ecNumber>
    </recommendedName>
    <alternativeName>
        <fullName evidence="1">D-glutamic acid-adding enzyme</fullName>
    </alternativeName>
    <alternativeName>
        <fullName evidence="1">UDP-N-acetylmuramoyl-L-alanyl-D-glutamate synthetase</fullName>
    </alternativeName>
</protein>
<sequence>MKHQRVIVLGAGVTGKSVAEFLHSRGSYVIGIDGSLDALNSCSFFHERYLDTIEEFPEDMDLFVRSPGVKPSHSLVVEAKRRGIPIVTDVQLAFQDPEFHRYPSIGITGSAGKTTTVLFLVHLLRSMGMGAFAMGNIGVPILQAMREKGIRVVEISSFQLTEQEIETPVLSGAAILNISENHLDYHQSLQNYSEAKRNITKCLQSVESLWVGEWLSPGKSYLDYTKEIASVLDKGSALKPLYLHDRSNYCAAYALANEISNVPLEAFLQALQTFEKPPHRIEYLGEKDGVSYINDSKATTMSSVEKALIAVKENVIVILGGRNKGSDFTSLIPILTQTVKHIVAMGECRNEIAQALSGSLPLTQARDLQEAVSMAQSIAQPGDVILLSPGCASFDQFRSFEERGDCFRQLVGDMEALRV</sequence>
<dbReference type="EC" id="6.3.2.9" evidence="1"/>
<dbReference type="EMBL" id="AE015925">
    <property type="protein sequence ID" value="AAP05608.1"/>
    <property type="molecule type" value="Genomic_DNA"/>
</dbReference>
<dbReference type="RefSeq" id="WP_011006822.1">
    <property type="nucleotide sequence ID" value="NC_003361.3"/>
</dbReference>
<dbReference type="SMR" id="Q821S1"/>
<dbReference type="STRING" id="227941.CCA_00867"/>
<dbReference type="KEGG" id="cca:CCA_00867"/>
<dbReference type="eggNOG" id="COG0771">
    <property type="taxonomic scope" value="Bacteria"/>
</dbReference>
<dbReference type="HOGENOM" id="CLU_032540_0_0_0"/>
<dbReference type="OrthoDB" id="9809796at2"/>
<dbReference type="UniPathway" id="UPA00219"/>
<dbReference type="Proteomes" id="UP000002193">
    <property type="component" value="Chromosome"/>
</dbReference>
<dbReference type="GO" id="GO:0005737">
    <property type="term" value="C:cytoplasm"/>
    <property type="evidence" value="ECO:0007669"/>
    <property type="project" value="UniProtKB-SubCell"/>
</dbReference>
<dbReference type="GO" id="GO:0005524">
    <property type="term" value="F:ATP binding"/>
    <property type="evidence" value="ECO:0007669"/>
    <property type="project" value="UniProtKB-UniRule"/>
</dbReference>
<dbReference type="GO" id="GO:0008764">
    <property type="term" value="F:UDP-N-acetylmuramoylalanine-D-glutamate ligase activity"/>
    <property type="evidence" value="ECO:0007669"/>
    <property type="project" value="UniProtKB-UniRule"/>
</dbReference>
<dbReference type="GO" id="GO:0051301">
    <property type="term" value="P:cell division"/>
    <property type="evidence" value="ECO:0007669"/>
    <property type="project" value="UniProtKB-KW"/>
</dbReference>
<dbReference type="GO" id="GO:0071555">
    <property type="term" value="P:cell wall organization"/>
    <property type="evidence" value="ECO:0007669"/>
    <property type="project" value="UniProtKB-KW"/>
</dbReference>
<dbReference type="GO" id="GO:0009252">
    <property type="term" value="P:peptidoglycan biosynthetic process"/>
    <property type="evidence" value="ECO:0007669"/>
    <property type="project" value="UniProtKB-UniRule"/>
</dbReference>
<dbReference type="GO" id="GO:0008360">
    <property type="term" value="P:regulation of cell shape"/>
    <property type="evidence" value="ECO:0007669"/>
    <property type="project" value="UniProtKB-KW"/>
</dbReference>
<dbReference type="Gene3D" id="3.90.190.20">
    <property type="entry name" value="Mur ligase, C-terminal domain"/>
    <property type="match status" value="1"/>
</dbReference>
<dbReference type="Gene3D" id="3.40.1190.10">
    <property type="entry name" value="Mur-like, catalytic domain"/>
    <property type="match status" value="1"/>
</dbReference>
<dbReference type="Gene3D" id="3.40.50.720">
    <property type="entry name" value="NAD(P)-binding Rossmann-like Domain"/>
    <property type="match status" value="1"/>
</dbReference>
<dbReference type="HAMAP" id="MF_00639">
    <property type="entry name" value="MurD"/>
    <property type="match status" value="1"/>
</dbReference>
<dbReference type="InterPro" id="IPR036565">
    <property type="entry name" value="Mur-like_cat_sf"/>
</dbReference>
<dbReference type="InterPro" id="IPR004101">
    <property type="entry name" value="Mur_ligase_C"/>
</dbReference>
<dbReference type="InterPro" id="IPR036615">
    <property type="entry name" value="Mur_ligase_C_dom_sf"/>
</dbReference>
<dbReference type="InterPro" id="IPR013221">
    <property type="entry name" value="Mur_ligase_cen"/>
</dbReference>
<dbReference type="InterPro" id="IPR005762">
    <property type="entry name" value="MurD"/>
</dbReference>
<dbReference type="NCBIfam" id="TIGR01087">
    <property type="entry name" value="murD"/>
    <property type="match status" value="1"/>
</dbReference>
<dbReference type="PANTHER" id="PTHR43692">
    <property type="entry name" value="UDP-N-ACETYLMURAMOYLALANINE--D-GLUTAMATE LIGASE"/>
    <property type="match status" value="1"/>
</dbReference>
<dbReference type="PANTHER" id="PTHR43692:SF1">
    <property type="entry name" value="UDP-N-ACETYLMURAMOYLALANINE--D-GLUTAMATE LIGASE"/>
    <property type="match status" value="1"/>
</dbReference>
<dbReference type="Pfam" id="PF02875">
    <property type="entry name" value="Mur_ligase_C"/>
    <property type="match status" value="1"/>
</dbReference>
<dbReference type="Pfam" id="PF08245">
    <property type="entry name" value="Mur_ligase_M"/>
    <property type="match status" value="1"/>
</dbReference>
<dbReference type="Pfam" id="PF21799">
    <property type="entry name" value="MurD-like_N"/>
    <property type="match status" value="1"/>
</dbReference>
<dbReference type="SUPFAM" id="SSF51984">
    <property type="entry name" value="MurCD N-terminal domain"/>
    <property type="match status" value="1"/>
</dbReference>
<dbReference type="SUPFAM" id="SSF53623">
    <property type="entry name" value="MurD-like peptide ligases, catalytic domain"/>
    <property type="match status" value="1"/>
</dbReference>
<dbReference type="SUPFAM" id="SSF53244">
    <property type="entry name" value="MurD-like peptide ligases, peptide-binding domain"/>
    <property type="match status" value="1"/>
</dbReference>